<feature type="chain" id="PRO_0000271312" description="Probable uridylyltransferase SAR2262">
    <location>
        <begin position="1"/>
        <end position="395"/>
    </location>
</feature>
<feature type="binding site" evidence="1">
    <location>
        <begin position="99"/>
        <end position="102"/>
    </location>
    <ligand>
        <name>UTP</name>
        <dbReference type="ChEBI" id="CHEBI:46398"/>
    </ligand>
</feature>
<feature type="binding site" evidence="1">
    <location>
        <position position="113"/>
    </location>
    <ligand>
        <name>UTP</name>
        <dbReference type="ChEBI" id="CHEBI:46398"/>
    </ligand>
</feature>
<feature type="binding site" evidence="1">
    <location>
        <position position="178"/>
    </location>
    <ligand>
        <name>UTP</name>
        <dbReference type="ChEBI" id="CHEBI:46398"/>
    </ligand>
</feature>
<feature type="binding site" evidence="1">
    <location>
        <position position="204"/>
    </location>
    <ligand>
        <name>UTP</name>
        <dbReference type="ChEBI" id="CHEBI:46398"/>
    </ligand>
</feature>
<feature type="binding site" evidence="1">
    <location>
        <position position="235"/>
    </location>
    <ligand>
        <name>UTP</name>
        <dbReference type="ChEBI" id="CHEBI:46398"/>
    </ligand>
</feature>
<feature type="binding site" evidence="1">
    <location>
        <position position="344"/>
    </location>
    <ligand>
        <name>UTP</name>
        <dbReference type="ChEBI" id="CHEBI:46398"/>
    </ligand>
</feature>
<keyword id="KW-0548">Nucleotidyltransferase</keyword>
<keyword id="KW-0808">Transferase</keyword>
<protein>
    <recommendedName>
        <fullName>Probable uridylyltransferase SAR2262</fullName>
        <ecNumber>2.7.7.-</ecNumber>
    </recommendedName>
</protein>
<comment type="similarity">
    <text evidence="2">Belongs to the UDPGP type 1 family.</text>
</comment>
<reference key="1">
    <citation type="journal article" date="2004" name="Proc. Natl. Acad. Sci. U.S.A.">
        <title>Complete genomes of two clinical Staphylococcus aureus strains: evidence for the rapid evolution of virulence and drug resistance.</title>
        <authorList>
            <person name="Holden M.T.G."/>
            <person name="Feil E.J."/>
            <person name="Lindsay J.A."/>
            <person name="Peacock S.J."/>
            <person name="Day N.P.J."/>
            <person name="Enright M.C."/>
            <person name="Foster T.J."/>
            <person name="Moore C.E."/>
            <person name="Hurst L."/>
            <person name="Atkin R."/>
            <person name="Barron A."/>
            <person name="Bason N."/>
            <person name="Bentley S.D."/>
            <person name="Chillingworth C."/>
            <person name="Chillingworth T."/>
            <person name="Churcher C."/>
            <person name="Clark L."/>
            <person name="Corton C."/>
            <person name="Cronin A."/>
            <person name="Doggett J."/>
            <person name="Dowd L."/>
            <person name="Feltwell T."/>
            <person name="Hance Z."/>
            <person name="Harris B."/>
            <person name="Hauser H."/>
            <person name="Holroyd S."/>
            <person name="Jagels K."/>
            <person name="James K.D."/>
            <person name="Lennard N."/>
            <person name="Line A."/>
            <person name="Mayes R."/>
            <person name="Moule S."/>
            <person name="Mungall K."/>
            <person name="Ormond D."/>
            <person name="Quail M.A."/>
            <person name="Rabbinowitsch E."/>
            <person name="Rutherford K.M."/>
            <person name="Sanders M."/>
            <person name="Sharp S."/>
            <person name="Simmonds M."/>
            <person name="Stevens K."/>
            <person name="Whitehead S."/>
            <person name="Barrell B.G."/>
            <person name="Spratt B.G."/>
            <person name="Parkhill J."/>
        </authorList>
    </citation>
    <scope>NUCLEOTIDE SEQUENCE [LARGE SCALE GENOMIC DNA]</scope>
    <source>
        <strain>MRSA252</strain>
    </source>
</reference>
<proteinExistence type="inferred from homology"/>
<accession>Q6GEQ8</accession>
<sequence>MLDKNQLAKYKQDHLCEYEKIMSNNEKEALEEKVASLDLDFIAKLYNDLYINKKTIDDVSAVSEVKYDIKSQMSDDEIKRLEEQGLQAIKEGQFAVLLMAGGQGTRLGYKGPKGSFEIEGVSLFELQAKQLKELHRQTGHKIQWYIMTSDINHEETLAYFESHNYFGYDQESIHFFKQDNIVALSEAGQLILNQQGRIMETPNGNGGVFKSLDKAGYLEEMSNNGVKYIFLNNIDNVLVKVLDPLFAGFTVEHDYDITSKTIQPKPGESVGRLVNVDCKDTVLEYSELDPEVANQFNNANIGIHAFKLGFILNAVNRELPYHLAIKNLKQLDENFGVIEQPTLKFELFYFDIFTYGTSFVTLQVPREEEFSPLKNKEGKDSVATATEDLRRMGLI</sequence>
<organism>
    <name type="scientific">Staphylococcus aureus (strain MRSA252)</name>
    <dbReference type="NCBI Taxonomy" id="282458"/>
    <lineage>
        <taxon>Bacteria</taxon>
        <taxon>Bacillati</taxon>
        <taxon>Bacillota</taxon>
        <taxon>Bacilli</taxon>
        <taxon>Bacillales</taxon>
        <taxon>Staphylococcaceae</taxon>
        <taxon>Staphylococcus</taxon>
    </lineage>
</organism>
<name>URTF_STAAR</name>
<gene>
    <name type="ordered locus">SAR2262</name>
</gene>
<dbReference type="EC" id="2.7.7.-"/>
<dbReference type="EMBL" id="BX571856">
    <property type="protein sequence ID" value="CAG41240.1"/>
    <property type="molecule type" value="Genomic_DNA"/>
</dbReference>
<dbReference type="RefSeq" id="WP_000884730.1">
    <property type="nucleotide sequence ID" value="NC_002952.2"/>
</dbReference>
<dbReference type="SMR" id="Q6GEQ8"/>
<dbReference type="KEGG" id="sar:SAR2262"/>
<dbReference type="HOGENOM" id="CLU_025603_1_2_9"/>
<dbReference type="Proteomes" id="UP000000596">
    <property type="component" value="Chromosome"/>
</dbReference>
<dbReference type="GO" id="GO:0070569">
    <property type="term" value="F:uridylyltransferase activity"/>
    <property type="evidence" value="ECO:0007669"/>
    <property type="project" value="InterPro"/>
</dbReference>
<dbReference type="CDD" id="cd04193">
    <property type="entry name" value="UDPGlcNAc_PPase"/>
    <property type="match status" value="1"/>
</dbReference>
<dbReference type="Gene3D" id="3.90.550.10">
    <property type="entry name" value="Spore Coat Polysaccharide Biosynthesis Protein SpsA, Chain A"/>
    <property type="match status" value="1"/>
</dbReference>
<dbReference type="InterPro" id="IPR029044">
    <property type="entry name" value="Nucleotide-diphossugar_trans"/>
</dbReference>
<dbReference type="InterPro" id="IPR039741">
    <property type="entry name" value="UDP-sugar_pyrophosphorylase"/>
</dbReference>
<dbReference type="InterPro" id="IPR002618">
    <property type="entry name" value="UDPGP_fam"/>
</dbReference>
<dbReference type="PANTHER" id="PTHR11952:SF2">
    <property type="entry name" value="LD24639P"/>
    <property type="match status" value="1"/>
</dbReference>
<dbReference type="PANTHER" id="PTHR11952">
    <property type="entry name" value="UDP- GLUCOSE PYROPHOSPHORYLASE"/>
    <property type="match status" value="1"/>
</dbReference>
<dbReference type="Pfam" id="PF01704">
    <property type="entry name" value="UDPGP"/>
    <property type="match status" value="1"/>
</dbReference>
<dbReference type="SUPFAM" id="SSF53448">
    <property type="entry name" value="Nucleotide-diphospho-sugar transferases"/>
    <property type="match status" value="1"/>
</dbReference>
<evidence type="ECO:0000250" key="1">
    <source>
        <dbReference type="UniProtKB" id="Q9M9P3"/>
    </source>
</evidence>
<evidence type="ECO:0000305" key="2"/>